<organism>
    <name type="scientific">Rhodococcus globerulus</name>
    <dbReference type="NCBI Taxonomy" id="33008"/>
    <lineage>
        <taxon>Bacteria</taxon>
        <taxon>Bacillati</taxon>
        <taxon>Actinomycetota</taxon>
        <taxon>Actinomycetes</taxon>
        <taxon>Mycobacteriales</taxon>
        <taxon>Nocardiaceae</taxon>
        <taxon>Rhodococcus</taxon>
    </lineage>
</organism>
<reference key="1">
    <citation type="journal article" date="1997" name="J. Bacteriol.">
        <title>A 3-(3-hydroxyphenyl)propionic acid catabolic pathway in Rhodococcus globerulus PWD1: cloning and characterization of the hpp operon.</title>
        <authorList>
            <person name="Barnes M.R."/>
            <person name="Duetz W.A."/>
            <person name="Williams P.A."/>
        </authorList>
    </citation>
    <scope>NUCLEOTIDE SEQUENCE [GENOMIC DNA]</scope>
    <source>
        <strain>PWD1</strain>
    </source>
</reference>
<gene>
    <name evidence="1" type="primary">mhpB</name>
    <name type="synonym">hppB</name>
</gene>
<evidence type="ECO:0000255" key="1">
    <source>
        <dbReference type="HAMAP-Rule" id="MF_01653"/>
    </source>
</evidence>
<sequence length="314" mass="34735">MKQALLCMSHSPLLHHLDPPADVKASVEAAFDQARAFVHNFDPDVIVNFGPDHYNGFFYDLMPPFCIGYKAKGSGDYDSFAGELNVPEAMAEDLAQFVMDQGLDIAISRQMEVDHGAVQPMEIIYGDVASKPLIPVFVNSVARPFVKVARVRKFGEAVGAYFKNSDKKVLFIGSGGLSHDPPVPQIATADEAQRKMLTDGRNPTPQARAARQQRVIDTAVKFAADEADIMDLNPEWDRGFLDVCASGRIEDFDRYTADDMDAVAGHSSHEVRNWVAAYSALRACGEYEIAYEFYRPIKEYISGFAVTTAILRDI</sequence>
<keyword id="KW-0058">Aromatic hydrocarbons catabolism</keyword>
<keyword id="KW-0223">Dioxygenase</keyword>
<keyword id="KW-0408">Iron</keyword>
<keyword id="KW-0560">Oxidoreductase</keyword>
<comment type="function">
    <text evidence="1">Catalyzes the non-heme iron(II)-dependent oxidative cleavage of 2,3-dihydroxyphenylpropionic acid and 2,3-dihydroxicinnamic acid into 2-hydroxy-6-ketononadienedioate and 2-hydroxy-6-ketononatrienedioate, respectively.</text>
</comment>
<comment type="catalytic activity">
    <reaction evidence="1">
        <text>3-(2,3-dihydroxyphenyl)propanoate + O2 = (2Z,4E)-2-hydroxy-6-oxonona-2,4-dienedioate + H(+)</text>
        <dbReference type="Rhea" id="RHEA:23840"/>
        <dbReference type="ChEBI" id="CHEBI:15378"/>
        <dbReference type="ChEBI" id="CHEBI:15379"/>
        <dbReference type="ChEBI" id="CHEBI:46951"/>
        <dbReference type="ChEBI" id="CHEBI:66887"/>
        <dbReference type="EC" id="1.13.11.16"/>
    </reaction>
</comment>
<comment type="catalytic activity">
    <reaction evidence="1">
        <text>(2E)-3-(2,3-dihydroxyphenyl)prop-2-enoate + O2 = (2Z,4E,7E)-2-hydroxy-6-oxonona-2,4,7-trienedioate + H(+)</text>
        <dbReference type="Rhea" id="RHEA:25054"/>
        <dbReference type="ChEBI" id="CHEBI:15378"/>
        <dbReference type="ChEBI" id="CHEBI:15379"/>
        <dbReference type="ChEBI" id="CHEBI:58642"/>
        <dbReference type="ChEBI" id="CHEBI:66888"/>
        <dbReference type="EC" id="1.13.11.16"/>
    </reaction>
</comment>
<comment type="cofactor">
    <cofactor evidence="1">
        <name>Fe(2+)</name>
        <dbReference type="ChEBI" id="CHEBI:29033"/>
    </cofactor>
</comment>
<comment type="pathway">
    <text evidence="1">Aromatic compound metabolism; 3-phenylpropanoate degradation.</text>
</comment>
<comment type="subunit">
    <text evidence="1">Homotetramer.</text>
</comment>
<comment type="similarity">
    <text evidence="1">Belongs to the LigB/MhpB extradiol dioxygenase family.</text>
</comment>
<protein>
    <recommendedName>
        <fullName evidence="1">2,3-dihydroxyphenylpropionate/2,3-dihydroxicinnamic acid 1,2-dioxygenase</fullName>
        <ecNumber evidence="1">1.13.11.16</ecNumber>
    </recommendedName>
    <alternativeName>
        <fullName evidence="1">3-carboxyethylcatechol 2,3-dioxygenase</fullName>
    </alternativeName>
</protein>
<feature type="chain" id="PRO_0000337665" description="2,3-dihydroxyphenylpropionate/2,3-dihydroxicinnamic acid 1,2-dioxygenase">
    <location>
        <begin position="1"/>
        <end position="314"/>
    </location>
</feature>
<feature type="active site" description="Proton donor" evidence="1">
    <location>
        <position position="115"/>
    </location>
</feature>
<feature type="active site" description="Proton acceptor" evidence="1">
    <location>
        <position position="179"/>
    </location>
</feature>
<accession>O05146</accession>
<dbReference type="EC" id="1.13.11.16" evidence="1"/>
<dbReference type="EMBL" id="U89712">
    <property type="protein sequence ID" value="AAB81314.1"/>
    <property type="molecule type" value="Genomic_DNA"/>
</dbReference>
<dbReference type="RefSeq" id="WP_033233746.1">
    <property type="nucleotide sequence ID" value="NZ_QEOC01000001.1"/>
</dbReference>
<dbReference type="SMR" id="O05146"/>
<dbReference type="UniPathway" id="UPA00714"/>
<dbReference type="GO" id="GO:0047070">
    <property type="term" value="F:3-carboxyethylcatechol 2,3-dioxygenase activity"/>
    <property type="evidence" value="ECO:0007669"/>
    <property type="project" value="UniProtKB-UniRule"/>
</dbReference>
<dbReference type="GO" id="GO:0008198">
    <property type="term" value="F:ferrous iron binding"/>
    <property type="evidence" value="ECO:0007669"/>
    <property type="project" value="InterPro"/>
</dbReference>
<dbReference type="GO" id="GO:0019380">
    <property type="term" value="P:3-phenylpropionate catabolic process"/>
    <property type="evidence" value="ECO:0007669"/>
    <property type="project" value="UniProtKB-UniRule"/>
</dbReference>
<dbReference type="CDD" id="cd07365">
    <property type="entry name" value="MhpB_like"/>
    <property type="match status" value="1"/>
</dbReference>
<dbReference type="Gene3D" id="3.40.830.10">
    <property type="entry name" value="LigB-like"/>
    <property type="match status" value="1"/>
</dbReference>
<dbReference type="HAMAP" id="MF_01653">
    <property type="entry name" value="MhpB"/>
    <property type="match status" value="1"/>
</dbReference>
<dbReference type="InterPro" id="IPR023789">
    <property type="entry name" value="DHPP/DHXA_dioxygenase"/>
</dbReference>
<dbReference type="InterPro" id="IPR004183">
    <property type="entry name" value="Xdiol_dOase_suB"/>
</dbReference>
<dbReference type="NCBIfam" id="NF009910">
    <property type="entry name" value="PRK13370.1-4"/>
    <property type="match status" value="1"/>
</dbReference>
<dbReference type="Pfam" id="PF02900">
    <property type="entry name" value="LigB"/>
    <property type="match status" value="1"/>
</dbReference>
<dbReference type="SUPFAM" id="SSF53213">
    <property type="entry name" value="LigB-like"/>
    <property type="match status" value="1"/>
</dbReference>
<proteinExistence type="inferred from homology"/>
<name>MHPB_RHOGO</name>